<evidence type="ECO:0000255" key="1">
    <source>
        <dbReference type="HAMAP-Rule" id="MF_00662"/>
    </source>
</evidence>
<comment type="function">
    <text evidence="1">Catalyzes the formation of phosphatidylethanolamine (PtdEtn) from phosphatidylserine (PtdSer).</text>
</comment>
<comment type="catalytic activity">
    <reaction evidence="1">
        <text>a 1,2-diacyl-sn-glycero-3-phospho-L-serine + H(+) = a 1,2-diacyl-sn-glycero-3-phosphoethanolamine + CO2</text>
        <dbReference type="Rhea" id="RHEA:20828"/>
        <dbReference type="ChEBI" id="CHEBI:15378"/>
        <dbReference type="ChEBI" id="CHEBI:16526"/>
        <dbReference type="ChEBI" id="CHEBI:57262"/>
        <dbReference type="ChEBI" id="CHEBI:64612"/>
        <dbReference type="EC" id="4.1.1.65"/>
    </reaction>
</comment>
<comment type="cofactor">
    <cofactor evidence="1">
        <name>pyruvate</name>
        <dbReference type="ChEBI" id="CHEBI:15361"/>
    </cofactor>
    <text evidence="1">Binds 1 pyruvoyl group covalently per subunit.</text>
</comment>
<comment type="pathway">
    <text evidence="1">Phospholipid metabolism; phosphatidylethanolamine biosynthesis; phosphatidylethanolamine from CDP-diacylglycerol: step 2/2.</text>
</comment>
<comment type="subunit">
    <text evidence="1">Heterodimer of a large membrane-associated beta subunit and a small pyruvoyl-containing alpha subunit.</text>
</comment>
<comment type="subcellular location">
    <subcellularLocation>
        <location evidence="1">Cell membrane</location>
        <topology evidence="1">Peripheral membrane protein</topology>
    </subcellularLocation>
</comment>
<comment type="PTM">
    <text evidence="1">Is synthesized initially as an inactive proenzyme. Formation of the active enzyme involves a self-maturation process in which the active site pyruvoyl group is generated from an internal serine residue via an autocatalytic post-translational modification. Two non-identical subunits are generated from the proenzyme in this reaction, and the pyruvate is formed at the N-terminus of the alpha chain, which is derived from the carboxyl end of the proenzyme. The autoendoproteolytic cleavage occurs by a canonical serine protease mechanism, in which the side chain hydroxyl group of the serine supplies its oxygen atom to form the C-terminus of the beta chain, while the remainder of the serine residue undergoes an oxidative deamination to produce ammonia and the pyruvoyl prosthetic group on the alpha chain. During this reaction, the Ser that is part of the protease active site of the proenzyme becomes the pyruvoyl prosthetic group, which constitutes an essential element of the active site of the mature decarboxylase.</text>
</comment>
<comment type="similarity">
    <text evidence="1">Belongs to the phosphatidylserine decarboxylase family. PSD-B subfamily. Prokaryotic type I sub-subfamily.</text>
</comment>
<name>PSD_CAMJE</name>
<sequence length="266" mass="30516">MSFSKESSRLFGFVAGIKFPKMIQKVINENYVKYFNINMSEFKAPCEYESLNALFTRTLQIPRKFEEGFISPSDGKILECGSTFLANEEHFAFSIKGHAYSVEELLKDSFEKDELKNGLDYVNIYLSPKDYHRYHSPCDMQILSATYTSGVLYSVNEKHLERISNLYVKNERVSLKCQNEKGIFWLVFVGAQNVGKMRFNFDASIQTNAKISHNFTRKYENLNFKKGEELGNFELGSTIVLISQKGLLTFNLKVGQGIKFGEKIAD</sequence>
<accession>Q9PP76</accession>
<accession>Q0PA43</accession>
<dbReference type="EC" id="4.1.1.65" evidence="1"/>
<dbReference type="EMBL" id="AL111168">
    <property type="protein sequence ID" value="CAL34975.1"/>
    <property type="molecule type" value="Genomic_DNA"/>
</dbReference>
<dbReference type="PIR" id="G81357">
    <property type="entry name" value="G81357"/>
</dbReference>
<dbReference type="RefSeq" id="WP_002852452.1">
    <property type="nucleotide sequence ID" value="NZ_SZUC01000001.1"/>
</dbReference>
<dbReference type="RefSeq" id="YP_002344254.1">
    <property type="nucleotide sequence ID" value="NC_002163.1"/>
</dbReference>
<dbReference type="SMR" id="Q9PP76"/>
<dbReference type="IntAct" id="Q9PP76">
    <property type="interactions" value="2"/>
</dbReference>
<dbReference type="STRING" id="192222.Cj0847"/>
<dbReference type="PaxDb" id="192222-Cj0847"/>
<dbReference type="DNASU" id="904800"/>
<dbReference type="EnsemblBacteria" id="CAL34975">
    <property type="protein sequence ID" value="CAL34975"/>
    <property type="gene ID" value="Cj0847"/>
</dbReference>
<dbReference type="GeneID" id="904800"/>
<dbReference type="KEGG" id="cje:Cj0847"/>
<dbReference type="PATRIC" id="fig|192222.6.peg.835"/>
<dbReference type="eggNOG" id="COG0688">
    <property type="taxonomic scope" value="Bacteria"/>
</dbReference>
<dbReference type="HOGENOM" id="CLU_029061_4_0_7"/>
<dbReference type="OrthoDB" id="9802030at2"/>
<dbReference type="UniPathway" id="UPA00558">
    <property type="reaction ID" value="UER00616"/>
</dbReference>
<dbReference type="Proteomes" id="UP000000799">
    <property type="component" value="Chromosome"/>
</dbReference>
<dbReference type="GO" id="GO:0005886">
    <property type="term" value="C:plasma membrane"/>
    <property type="evidence" value="ECO:0007669"/>
    <property type="project" value="UniProtKB-SubCell"/>
</dbReference>
<dbReference type="GO" id="GO:0004609">
    <property type="term" value="F:phosphatidylserine decarboxylase activity"/>
    <property type="evidence" value="ECO:0007669"/>
    <property type="project" value="UniProtKB-UniRule"/>
</dbReference>
<dbReference type="GO" id="GO:0006646">
    <property type="term" value="P:phosphatidylethanolamine biosynthetic process"/>
    <property type="evidence" value="ECO:0007669"/>
    <property type="project" value="UniProtKB-UniRule"/>
</dbReference>
<dbReference type="HAMAP" id="MF_00662">
    <property type="entry name" value="PS_decarb_PSD_B_type1"/>
    <property type="match status" value="1"/>
</dbReference>
<dbReference type="InterPro" id="IPR037192">
    <property type="entry name" value="ERO1-like_sf"/>
</dbReference>
<dbReference type="InterPro" id="IPR003817">
    <property type="entry name" value="PS_Dcarbxylase"/>
</dbReference>
<dbReference type="InterPro" id="IPR033177">
    <property type="entry name" value="PSD-B"/>
</dbReference>
<dbReference type="InterPro" id="IPR033178">
    <property type="entry name" value="PSD_type1_pro"/>
</dbReference>
<dbReference type="NCBIfam" id="NF003038">
    <property type="entry name" value="PRK03934.1"/>
    <property type="match status" value="1"/>
</dbReference>
<dbReference type="NCBIfam" id="TIGR00163">
    <property type="entry name" value="PS_decarb"/>
    <property type="match status" value="1"/>
</dbReference>
<dbReference type="PANTHER" id="PTHR10067">
    <property type="entry name" value="PHOSPHATIDYLSERINE DECARBOXYLASE"/>
    <property type="match status" value="1"/>
</dbReference>
<dbReference type="PANTHER" id="PTHR10067:SF6">
    <property type="entry name" value="PHOSPHATIDYLSERINE DECARBOXYLASE PROENZYME, MITOCHONDRIAL"/>
    <property type="match status" value="1"/>
</dbReference>
<dbReference type="Pfam" id="PF02666">
    <property type="entry name" value="PS_Dcarbxylase"/>
    <property type="match status" value="1"/>
</dbReference>
<dbReference type="SUPFAM" id="SSF110019">
    <property type="entry name" value="ERO1-like"/>
    <property type="match status" value="1"/>
</dbReference>
<gene>
    <name evidence="1" type="primary">psd</name>
    <name type="ordered locus">Cj0847</name>
</gene>
<proteinExistence type="inferred from homology"/>
<keyword id="KW-1003">Cell membrane</keyword>
<keyword id="KW-0210">Decarboxylase</keyword>
<keyword id="KW-0444">Lipid biosynthesis</keyword>
<keyword id="KW-0443">Lipid metabolism</keyword>
<keyword id="KW-0456">Lyase</keyword>
<keyword id="KW-0472">Membrane</keyword>
<keyword id="KW-0594">Phospholipid biosynthesis</keyword>
<keyword id="KW-1208">Phospholipid metabolism</keyword>
<keyword id="KW-0670">Pyruvate</keyword>
<keyword id="KW-1185">Reference proteome</keyword>
<keyword id="KW-0865">Zymogen</keyword>
<reference key="1">
    <citation type="journal article" date="2000" name="Nature">
        <title>The genome sequence of the food-borne pathogen Campylobacter jejuni reveals hypervariable sequences.</title>
        <authorList>
            <person name="Parkhill J."/>
            <person name="Wren B.W."/>
            <person name="Mungall K.L."/>
            <person name="Ketley J.M."/>
            <person name="Churcher C.M."/>
            <person name="Basham D."/>
            <person name="Chillingworth T."/>
            <person name="Davies R.M."/>
            <person name="Feltwell T."/>
            <person name="Holroyd S."/>
            <person name="Jagels K."/>
            <person name="Karlyshev A.V."/>
            <person name="Moule S."/>
            <person name="Pallen M.J."/>
            <person name="Penn C.W."/>
            <person name="Quail M.A."/>
            <person name="Rajandream M.A."/>
            <person name="Rutherford K.M."/>
            <person name="van Vliet A.H.M."/>
            <person name="Whitehead S."/>
            <person name="Barrell B.G."/>
        </authorList>
    </citation>
    <scope>NUCLEOTIDE SEQUENCE [LARGE SCALE GENOMIC DNA]</scope>
    <source>
        <strain>ATCC 700819 / NCTC 11168</strain>
    </source>
</reference>
<feature type="chain" id="PRO_0000029639" description="Phosphatidylserine decarboxylase beta chain" evidence="1">
    <location>
        <begin position="1"/>
        <end position="236"/>
    </location>
</feature>
<feature type="chain" id="PRO_0000029640" description="Phosphatidylserine decarboxylase alpha chain" evidence="1">
    <location>
        <begin position="237"/>
        <end position="266"/>
    </location>
</feature>
<feature type="active site" description="Charge relay system; for autoendoproteolytic cleavage activity" evidence="1">
    <location>
        <position position="74"/>
    </location>
</feature>
<feature type="active site" description="Charge relay system; for autoendoproteolytic cleavage activity" evidence="1">
    <location>
        <position position="135"/>
    </location>
</feature>
<feature type="active site" description="Charge relay system; for autoendoproteolytic cleavage activity" evidence="1">
    <location>
        <position position="237"/>
    </location>
</feature>
<feature type="active site" description="Schiff-base intermediate with substrate; via pyruvic acid; for decarboxylase activity" evidence="1">
    <location>
        <position position="237"/>
    </location>
</feature>
<feature type="site" description="Cleavage (non-hydrolytic); by autocatalysis" evidence="1">
    <location>
        <begin position="236"/>
        <end position="237"/>
    </location>
</feature>
<feature type="modified residue" description="Pyruvic acid (Ser); by autocatalysis" evidence="1">
    <location>
        <position position="237"/>
    </location>
</feature>
<organism>
    <name type="scientific">Campylobacter jejuni subsp. jejuni serotype O:2 (strain ATCC 700819 / NCTC 11168)</name>
    <dbReference type="NCBI Taxonomy" id="192222"/>
    <lineage>
        <taxon>Bacteria</taxon>
        <taxon>Pseudomonadati</taxon>
        <taxon>Campylobacterota</taxon>
        <taxon>Epsilonproteobacteria</taxon>
        <taxon>Campylobacterales</taxon>
        <taxon>Campylobacteraceae</taxon>
        <taxon>Campylobacter</taxon>
    </lineage>
</organism>
<protein>
    <recommendedName>
        <fullName evidence="1">Phosphatidylserine decarboxylase proenzyme</fullName>
        <ecNumber evidence="1">4.1.1.65</ecNumber>
    </recommendedName>
    <component>
        <recommendedName>
            <fullName evidence="1">Phosphatidylserine decarboxylase alpha chain</fullName>
        </recommendedName>
    </component>
    <component>
        <recommendedName>
            <fullName evidence="1">Phosphatidylserine decarboxylase beta chain</fullName>
        </recommendedName>
    </component>
</protein>